<sequence>MKQGTVKWFNAEKGFGFIEVEGENDVFVHFSAINQDGYKSLEEGQAVEFEVVEGDRGPQAANVVKL</sequence>
<protein>
    <recommendedName>
        <fullName>Cold shock protein CspA</fullName>
    </recommendedName>
</protein>
<accession>Q7A0X3</accession>
<feature type="chain" id="PRO_0000262546" description="Cold shock protein CspA">
    <location>
        <begin position="1"/>
        <end position="66"/>
    </location>
</feature>
<feature type="domain" description="CSD">
    <location>
        <begin position="1"/>
        <end position="66"/>
    </location>
</feature>
<evidence type="ECO:0000250" key="1"/>
<dbReference type="EMBL" id="BA000033">
    <property type="protein sequence ID" value="BAB95155.1"/>
    <property type="molecule type" value="Genomic_DNA"/>
</dbReference>
<dbReference type="RefSeq" id="WP_000809131.1">
    <property type="nucleotide sequence ID" value="NC_003923.1"/>
</dbReference>
<dbReference type="SMR" id="Q7A0X3"/>
<dbReference type="GeneID" id="98345769"/>
<dbReference type="KEGG" id="sam:MW1290"/>
<dbReference type="HOGENOM" id="CLU_117621_6_1_9"/>
<dbReference type="GO" id="GO:0005737">
    <property type="term" value="C:cytoplasm"/>
    <property type="evidence" value="ECO:0007669"/>
    <property type="project" value="UniProtKB-SubCell"/>
</dbReference>
<dbReference type="GO" id="GO:0003676">
    <property type="term" value="F:nucleic acid binding"/>
    <property type="evidence" value="ECO:0007669"/>
    <property type="project" value="InterPro"/>
</dbReference>
<dbReference type="CDD" id="cd04458">
    <property type="entry name" value="CSP_CDS"/>
    <property type="match status" value="1"/>
</dbReference>
<dbReference type="FunFam" id="2.40.50.140:FF:000006">
    <property type="entry name" value="Cold shock protein CspC"/>
    <property type="match status" value="1"/>
</dbReference>
<dbReference type="Gene3D" id="6.20.370.130">
    <property type="match status" value="1"/>
</dbReference>
<dbReference type="Gene3D" id="2.40.50.140">
    <property type="entry name" value="Nucleic acid-binding proteins"/>
    <property type="match status" value="1"/>
</dbReference>
<dbReference type="InterPro" id="IPR012156">
    <property type="entry name" value="Cold_shock_CspA"/>
</dbReference>
<dbReference type="InterPro" id="IPR050181">
    <property type="entry name" value="Cold_shock_domain"/>
</dbReference>
<dbReference type="InterPro" id="IPR011129">
    <property type="entry name" value="CSD"/>
</dbReference>
<dbReference type="InterPro" id="IPR019844">
    <property type="entry name" value="CSD_CS"/>
</dbReference>
<dbReference type="InterPro" id="IPR002059">
    <property type="entry name" value="CSP_DNA-bd"/>
</dbReference>
<dbReference type="InterPro" id="IPR012340">
    <property type="entry name" value="NA-bd_OB-fold"/>
</dbReference>
<dbReference type="PANTHER" id="PTHR11544">
    <property type="entry name" value="COLD SHOCK DOMAIN CONTAINING PROTEINS"/>
    <property type="match status" value="1"/>
</dbReference>
<dbReference type="Pfam" id="PF00313">
    <property type="entry name" value="CSD"/>
    <property type="match status" value="1"/>
</dbReference>
<dbReference type="PIRSF" id="PIRSF002599">
    <property type="entry name" value="Cold_shock_A"/>
    <property type="match status" value="1"/>
</dbReference>
<dbReference type="PRINTS" id="PR00050">
    <property type="entry name" value="COLDSHOCK"/>
</dbReference>
<dbReference type="SMART" id="SM00357">
    <property type="entry name" value="CSP"/>
    <property type="match status" value="1"/>
</dbReference>
<dbReference type="SUPFAM" id="SSF50249">
    <property type="entry name" value="Nucleic acid-binding proteins"/>
    <property type="match status" value="1"/>
</dbReference>
<dbReference type="PROSITE" id="PS00352">
    <property type="entry name" value="CSD_1"/>
    <property type="match status" value="1"/>
</dbReference>
<dbReference type="PROSITE" id="PS51857">
    <property type="entry name" value="CSD_2"/>
    <property type="match status" value="1"/>
</dbReference>
<comment type="function">
    <text evidence="1">Involved in cold stress response.</text>
</comment>
<comment type="subcellular location">
    <subcellularLocation>
        <location evidence="1">Cytoplasm</location>
    </subcellularLocation>
</comment>
<proteinExistence type="inferred from homology"/>
<reference key="1">
    <citation type="journal article" date="2002" name="Lancet">
        <title>Genome and virulence determinants of high virulence community-acquired MRSA.</title>
        <authorList>
            <person name="Baba T."/>
            <person name="Takeuchi F."/>
            <person name="Kuroda M."/>
            <person name="Yuzawa H."/>
            <person name="Aoki K."/>
            <person name="Oguchi A."/>
            <person name="Nagai Y."/>
            <person name="Iwama N."/>
            <person name="Asano K."/>
            <person name="Naimi T."/>
            <person name="Kuroda H."/>
            <person name="Cui L."/>
            <person name="Yamamoto K."/>
            <person name="Hiramatsu K."/>
        </authorList>
    </citation>
    <scope>NUCLEOTIDE SEQUENCE [LARGE SCALE GENOMIC DNA]</scope>
    <source>
        <strain>MW2</strain>
    </source>
</reference>
<keyword id="KW-0963">Cytoplasm</keyword>
<name>CSPA_STAAW</name>
<gene>
    <name type="primary">cspA</name>
    <name type="ordered locus">MW1290</name>
</gene>
<organism>
    <name type="scientific">Staphylococcus aureus (strain MW2)</name>
    <dbReference type="NCBI Taxonomy" id="196620"/>
    <lineage>
        <taxon>Bacteria</taxon>
        <taxon>Bacillati</taxon>
        <taxon>Bacillota</taxon>
        <taxon>Bacilli</taxon>
        <taxon>Bacillales</taxon>
        <taxon>Staphylococcaceae</taxon>
        <taxon>Staphylococcus</taxon>
    </lineage>
</organism>